<comment type="function">
    <text evidence="1">May play a role in bone development.</text>
</comment>
<comment type="subcellular location">
    <subcellularLocation>
        <location evidence="4">Membrane</location>
        <topology evidence="2">Multi-pass membrane protein</topology>
    </subcellularLocation>
</comment>
<comment type="similarity">
    <text evidence="4">Belongs to the TMEM263 family.</text>
</comment>
<feature type="chain" id="PRO_0000263628" description="Transmembrane protein 263">
    <location>
        <begin position="1"/>
        <end position="116"/>
    </location>
</feature>
<feature type="transmembrane region" description="Helical" evidence="2">
    <location>
        <begin position="40"/>
        <end position="60"/>
    </location>
</feature>
<feature type="transmembrane region" description="Helical" evidence="2">
    <location>
        <begin position="78"/>
        <end position="98"/>
    </location>
</feature>
<feature type="region of interest" description="Disordered" evidence="3">
    <location>
        <begin position="1"/>
        <end position="36"/>
    </location>
</feature>
<feature type="compositionally biased region" description="Polar residues" evidence="3">
    <location>
        <begin position="1"/>
        <end position="11"/>
    </location>
</feature>
<feature type="glycosylation site" description="N-linked (GlcNAc...) asparagine" evidence="2">
    <location>
        <position position="2"/>
    </location>
</feature>
<reference key="1">
    <citation type="submission" date="2005-08" db="EMBL/GenBank/DDBJ databases">
        <authorList>
            <consortium name="NIH - Mammalian Gene Collection (MGC) project"/>
        </authorList>
    </citation>
    <scope>NUCLEOTIDE SEQUENCE [LARGE SCALE MRNA]</scope>
    <source>
        <strain>Crossbred X Angus</strain>
        <tissue>Ileum</tissue>
    </source>
</reference>
<keyword id="KW-0325">Glycoprotein</keyword>
<keyword id="KW-0472">Membrane</keyword>
<keyword id="KW-1185">Reference proteome</keyword>
<keyword id="KW-0812">Transmembrane</keyword>
<keyword id="KW-1133">Transmembrane helix</keyword>
<name>TM263_BOVIN</name>
<accession>Q3SYV1</accession>
<sequence>MNQTDKNQQEIPSYLSDEPPEGSMKDHPQQQPGMLSRVTGGIFSVTKGAVGATIGGVAWIGGKSLEVTKTAVTTVPSMGIGLVKGGVSAVAGGVTAVGSAVVNKVPLTGKKKDKSD</sequence>
<protein>
    <recommendedName>
        <fullName>Transmembrane protein 263</fullName>
    </recommendedName>
</protein>
<evidence type="ECO:0000250" key="1">
    <source>
        <dbReference type="UniProtKB" id="Q8WUH6"/>
    </source>
</evidence>
<evidence type="ECO:0000255" key="2"/>
<evidence type="ECO:0000256" key="3">
    <source>
        <dbReference type="SAM" id="MobiDB-lite"/>
    </source>
</evidence>
<evidence type="ECO:0000305" key="4"/>
<gene>
    <name type="primary">TMEM263</name>
</gene>
<proteinExistence type="inferred from homology"/>
<organism>
    <name type="scientific">Bos taurus</name>
    <name type="common">Bovine</name>
    <dbReference type="NCBI Taxonomy" id="9913"/>
    <lineage>
        <taxon>Eukaryota</taxon>
        <taxon>Metazoa</taxon>
        <taxon>Chordata</taxon>
        <taxon>Craniata</taxon>
        <taxon>Vertebrata</taxon>
        <taxon>Euteleostomi</taxon>
        <taxon>Mammalia</taxon>
        <taxon>Eutheria</taxon>
        <taxon>Laurasiatheria</taxon>
        <taxon>Artiodactyla</taxon>
        <taxon>Ruminantia</taxon>
        <taxon>Pecora</taxon>
        <taxon>Bovidae</taxon>
        <taxon>Bovinae</taxon>
        <taxon>Bos</taxon>
    </lineage>
</organism>
<dbReference type="EMBL" id="BC103369">
    <property type="protein sequence ID" value="AAI03370.1"/>
    <property type="molecule type" value="mRNA"/>
</dbReference>
<dbReference type="RefSeq" id="NP_001029845.1">
    <property type="nucleotide sequence ID" value="NM_001034673.2"/>
</dbReference>
<dbReference type="FunCoup" id="Q3SYV1">
    <property type="interactions" value="775"/>
</dbReference>
<dbReference type="STRING" id="9913.ENSBTAP00000066511"/>
<dbReference type="GlyCosmos" id="Q3SYV1">
    <property type="glycosylation" value="1 site, No reported glycans"/>
</dbReference>
<dbReference type="GlyGen" id="Q3SYV1">
    <property type="glycosylation" value="1 site"/>
</dbReference>
<dbReference type="PaxDb" id="9913-ENSBTAP00000019167"/>
<dbReference type="GeneID" id="539347"/>
<dbReference type="KEGG" id="bta:539347"/>
<dbReference type="CTD" id="90488"/>
<dbReference type="eggNOG" id="ENOG502S1YC">
    <property type="taxonomic scope" value="Eukaryota"/>
</dbReference>
<dbReference type="HOGENOM" id="CLU_131259_1_0_1"/>
<dbReference type="InParanoid" id="Q3SYV1"/>
<dbReference type="TreeFam" id="TF333298"/>
<dbReference type="Proteomes" id="UP000009136">
    <property type="component" value="Unplaced"/>
</dbReference>
<dbReference type="GO" id="GO:0016020">
    <property type="term" value="C:membrane"/>
    <property type="evidence" value="ECO:0007669"/>
    <property type="project" value="UniProtKB-SubCell"/>
</dbReference>
<dbReference type="InterPro" id="IPR028153">
    <property type="entry name" value="UPF0444"/>
</dbReference>
<dbReference type="PANTHER" id="PTHR31443">
    <property type="match status" value="1"/>
</dbReference>
<dbReference type="Pfam" id="PF15475">
    <property type="entry name" value="UPF0444"/>
    <property type="match status" value="1"/>
</dbReference>